<reference key="1">
    <citation type="submission" date="2007-02" db="EMBL/GenBank/DDBJ databases">
        <title>Complete sequence of chromosome of Yersinia pestis Pestoides F.</title>
        <authorList>
            <consortium name="US DOE Joint Genome Institute"/>
            <person name="Copeland A."/>
            <person name="Lucas S."/>
            <person name="Lapidus A."/>
            <person name="Barry K."/>
            <person name="Detter J.C."/>
            <person name="Glavina del Rio T."/>
            <person name="Hammon N."/>
            <person name="Israni S."/>
            <person name="Dalin E."/>
            <person name="Tice H."/>
            <person name="Pitluck S."/>
            <person name="Di Bartolo G."/>
            <person name="Chain P."/>
            <person name="Malfatti S."/>
            <person name="Shin M."/>
            <person name="Vergez L."/>
            <person name="Schmutz J."/>
            <person name="Larimer F."/>
            <person name="Land M."/>
            <person name="Hauser L."/>
            <person name="Worsham P."/>
            <person name="Chu M."/>
            <person name="Bearden S."/>
            <person name="Garcia E."/>
            <person name="Richardson P."/>
        </authorList>
    </citation>
    <scope>NUCLEOTIDE SEQUENCE [LARGE SCALE GENOMIC DNA]</scope>
    <source>
        <strain>Pestoides F</strain>
    </source>
</reference>
<feature type="chain" id="PRO_1000055183" description="ATP synthase subunit beta">
    <location>
        <begin position="1"/>
        <end position="460"/>
    </location>
</feature>
<feature type="binding site" evidence="1">
    <location>
        <begin position="150"/>
        <end position="157"/>
    </location>
    <ligand>
        <name>ATP</name>
        <dbReference type="ChEBI" id="CHEBI:30616"/>
    </ligand>
</feature>
<protein>
    <recommendedName>
        <fullName evidence="1">ATP synthase subunit beta</fullName>
        <ecNumber evidence="1">7.1.2.2</ecNumber>
    </recommendedName>
    <alternativeName>
        <fullName evidence="1">ATP synthase F1 sector subunit beta</fullName>
    </alternativeName>
    <alternativeName>
        <fullName evidence="1">F-ATPase subunit beta</fullName>
    </alternativeName>
</protein>
<evidence type="ECO:0000255" key="1">
    <source>
        <dbReference type="HAMAP-Rule" id="MF_01347"/>
    </source>
</evidence>
<proteinExistence type="inferred from homology"/>
<accession>A4TSJ3</accession>
<name>ATPB_YERPP</name>
<organism>
    <name type="scientific">Yersinia pestis (strain Pestoides F)</name>
    <dbReference type="NCBI Taxonomy" id="386656"/>
    <lineage>
        <taxon>Bacteria</taxon>
        <taxon>Pseudomonadati</taxon>
        <taxon>Pseudomonadota</taxon>
        <taxon>Gammaproteobacteria</taxon>
        <taxon>Enterobacterales</taxon>
        <taxon>Yersiniaceae</taxon>
        <taxon>Yersinia</taxon>
    </lineage>
</organism>
<keyword id="KW-0066">ATP synthesis</keyword>
<keyword id="KW-0067">ATP-binding</keyword>
<keyword id="KW-0997">Cell inner membrane</keyword>
<keyword id="KW-1003">Cell membrane</keyword>
<keyword id="KW-0139">CF(1)</keyword>
<keyword id="KW-0375">Hydrogen ion transport</keyword>
<keyword id="KW-0406">Ion transport</keyword>
<keyword id="KW-0472">Membrane</keyword>
<keyword id="KW-0547">Nucleotide-binding</keyword>
<keyword id="KW-1278">Translocase</keyword>
<keyword id="KW-0813">Transport</keyword>
<comment type="function">
    <text evidence="1">Produces ATP from ADP in the presence of a proton gradient across the membrane. The catalytic sites are hosted primarily by the beta subunits.</text>
</comment>
<comment type="catalytic activity">
    <reaction evidence="1">
        <text>ATP + H2O + 4 H(+)(in) = ADP + phosphate + 5 H(+)(out)</text>
        <dbReference type="Rhea" id="RHEA:57720"/>
        <dbReference type="ChEBI" id="CHEBI:15377"/>
        <dbReference type="ChEBI" id="CHEBI:15378"/>
        <dbReference type="ChEBI" id="CHEBI:30616"/>
        <dbReference type="ChEBI" id="CHEBI:43474"/>
        <dbReference type="ChEBI" id="CHEBI:456216"/>
        <dbReference type="EC" id="7.1.2.2"/>
    </reaction>
</comment>
<comment type="subunit">
    <text evidence="1">F-type ATPases have 2 components, CF(1) - the catalytic core - and CF(0) - the membrane proton channel. CF(1) has five subunits: alpha(3), beta(3), gamma(1), delta(1), epsilon(1). CF(0) has three main subunits: a(1), b(2) and c(9-12). The alpha and beta chains form an alternating ring which encloses part of the gamma chain. CF(1) is attached to CF(0) by a central stalk formed by the gamma and epsilon chains, while a peripheral stalk is formed by the delta and b chains.</text>
</comment>
<comment type="subcellular location">
    <subcellularLocation>
        <location evidence="1">Cell inner membrane</location>
        <topology evidence="1">Peripheral membrane protein</topology>
    </subcellularLocation>
</comment>
<comment type="similarity">
    <text evidence="1">Belongs to the ATPase alpha/beta chains family.</text>
</comment>
<dbReference type="EC" id="7.1.2.2" evidence="1"/>
<dbReference type="EMBL" id="CP000668">
    <property type="protein sequence ID" value="ABP42255.1"/>
    <property type="molecule type" value="Genomic_DNA"/>
</dbReference>
<dbReference type="RefSeq" id="WP_002220753.1">
    <property type="nucleotide sequence ID" value="NZ_CP009715.1"/>
</dbReference>
<dbReference type="SMR" id="A4TSJ3"/>
<dbReference type="GeneID" id="57974603"/>
<dbReference type="KEGG" id="ypp:YPDSF_3914"/>
<dbReference type="PATRIC" id="fig|386656.14.peg.603"/>
<dbReference type="GO" id="GO:0005886">
    <property type="term" value="C:plasma membrane"/>
    <property type="evidence" value="ECO:0007669"/>
    <property type="project" value="UniProtKB-SubCell"/>
</dbReference>
<dbReference type="GO" id="GO:0045259">
    <property type="term" value="C:proton-transporting ATP synthase complex"/>
    <property type="evidence" value="ECO:0007669"/>
    <property type="project" value="UniProtKB-KW"/>
</dbReference>
<dbReference type="GO" id="GO:0005524">
    <property type="term" value="F:ATP binding"/>
    <property type="evidence" value="ECO:0007669"/>
    <property type="project" value="UniProtKB-UniRule"/>
</dbReference>
<dbReference type="GO" id="GO:0016887">
    <property type="term" value="F:ATP hydrolysis activity"/>
    <property type="evidence" value="ECO:0007669"/>
    <property type="project" value="InterPro"/>
</dbReference>
<dbReference type="GO" id="GO:0046933">
    <property type="term" value="F:proton-transporting ATP synthase activity, rotational mechanism"/>
    <property type="evidence" value="ECO:0007669"/>
    <property type="project" value="UniProtKB-UniRule"/>
</dbReference>
<dbReference type="CDD" id="cd18110">
    <property type="entry name" value="ATP-synt_F1_beta_C"/>
    <property type="match status" value="1"/>
</dbReference>
<dbReference type="CDD" id="cd18115">
    <property type="entry name" value="ATP-synt_F1_beta_N"/>
    <property type="match status" value="1"/>
</dbReference>
<dbReference type="CDD" id="cd01133">
    <property type="entry name" value="F1-ATPase_beta_CD"/>
    <property type="match status" value="1"/>
</dbReference>
<dbReference type="FunFam" id="1.10.1140.10:FF:000001">
    <property type="entry name" value="ATP synthase subunit beta"/>
    <property type="match status" value="1"/>
</dbReference>
<dbReference type="FunFam" id="2.40.10.170:FF:000003">
    <property type="entry name" value="ATP synthase subunit beta"/>
    <property type="match status" value="1"/>
</dbReference>
<dbReference type="FunFam" id="3.40.50.300:FF:000004">
    <property type="entry name" value="ATP synthase subunit beta"/>
    <property type="match status" value="1"/>
</dbReference>
<dbReference type="Gene3D" id="2.40.10.170">
    <property type="match status" value="1"/>
</dbReference>
<dbReference type="Gene3D" id="1.10.1140.10">
    <property type="entry name" value="Bovine Mitochondrial F1-atpase, Atp Synthase Beta Chain, Chain D, domain 3"/>
    <property type="match status" value="1"/>
</dbReference>
<dbReference type="Gene3D" id="3.40.50.300">
    <property type="entry name" value="P-loop containing nucleotide triphosphate hydrolases"/>
    <property type="match status" value="1"/>
</dbReference>
<dbReference type="HAMAP" id="MF_01347">
    <property type="entry name" value="ATP_synth_beta_bact"/>
    <property type="match status" value="1"/>
</dbReference>
<dbReference type="InterPro" id="IPR003593">
    <property type="entry name" value="AAA+_ATPase"/>
</dbReference>
<dbReference type="InterPro" id="IPR055190">
    <property type="entry name" value="ATP-synt_VA_C"/>
</dbReference>
<dbReference type="InterPro" id="IPR005722">
    <property type="entry name" value="ATP_synth_F1_bsu"/>
</dbReference>
<dbReference type="InterPro" id="IPR020003">
    <property type="entry name" value="ATPase_a/bsu_AS"/>
</dbReference>
<dbReference type="InterPro" id="IPR050053">
    <property type="entry name" value="ATPase_alpha/beta_chains"/>
</dbReference>
<dbReference type="InterPro" id="IPR004100">
    <property type="entry name" value="ATPase_F1/V1/A1_a/bsu_N"/>
</dbReference>
<dbReference type="InterPro" id="IPR036121">
    <property type="entry name" value="ATPase_F1/V1/A1_a/bsu_N_sf"/>
</dbReference>
<dbReference type="InterPro" id="IPR000194">
    <property type="entry name" value="ATPase_F1/V1/A1_a/bsu_nucl-bd"/>
</dbReference>
<dbReference type="InterPro" id="IPR024034">
    <property type="entry name" value="ATPase_F1/V1_b/a_C"/>
</dbReference>
<dbReference type="InterPro" id="IPR027417">
    <property type="entry name" value="P-loop_NTPase"/>
</dbReference>
<dbReference type="NCBIfam" id="TIGR01039">
    <property type="entry name" value="atpD"/>
    <property type="match status" value="1"/>
</dbReference>
<dbReference type="PANTHER" id="PTHR15184">
    <property type="entry name" value="ATP SYNTHASE"/>
    <property type="match status" value="1"/>
</dbReference>
<dbReference type="PANTHER" id="PTHR15184:SF71">
    <property type="entry name" value="ATP SYNTHASE SUBUNIT BETA, MITOCHONDRIAL"/>
    <property type="match status" value="1"/>
</dbReference>
<dbReference type="Pfam" id="PF00006">
    <property type="entry name" value="ATP-synt_ab"/>
    <property type="match status" value="1"/>
</dbReference>
<dbReference type="Pfam" id="PF02874">
    <property type="entry name" value="ATP-synt_ab_N"/>
    <property type="match status" value="1"/>
</dbReference>
<dbReference type="Pfam" id="PF22919">
    <property type="entry name" value="ATP-synt_VA_C"/>
    <property type="match status" value="1"/>
</dbReference>
<dbReference type="SMART" id="SM00382">
    <property type="entry name" value="AAA"/>
    <property type="match status" value="1"/>
</dbReference>
<dbReference type="SUPFAM" id="SSF47917">
    <property type="entry name" value="C-terminal domain of alpha and beta subunits of F1 ATP synthase"/>
    <property type="match status" value="1"/>
</dbReference>
<dbReference type="SUPFAM" id="SSF50615">
    <property type="entry name" value="N-terminal domain of alpha and beta subunits of F1 ATP synthase"/>
    <property type="match status" value="1"/>
</dbReference>
<dbReference type="SUPFAM" id="SSF52540">
    <property type="entry name" value="P-loop containing nucleoside triphosphate hydrolases"/>
    <property type="match status" value="1"/>
</dbReference>
<dbReference type="PROSITE" id="PS00152">
    <property type="entry name" value="ATPASE_ALPHA_BETA"/>
    <property type="match status" value="1"/>
</dbReference>
<sequence>MATGKIIQVIGAVVDVEFPQDAVPKVYNALEVEGTTEKLVLEVQQQLGGGVVRCIAMGSSDGLSRGLKVTNLEHPIEVPVGKATLGRIMNVLGEPIDMKGPIGEEERWAIHREAPSYEELASSQDLLETGIKVMDLICPFAKGGKVGLFGGAGVGKTVNMMELIRNIAIEHSGYSVFAGVGERTREGNDFYHEMTDSNVLDKVSLVYGQMNEPPGNRLRVALTGLTMAEKFRDEGRDVLLFIDNIYRYTLAGTEVSALLGRMPSAVGYQPTLAEEMGVLQERITSTKTGSITSVQAVYVPADDLTDPSPATTFAHLDATVVLSRQIASLGIYPAVDPLDSTSRQLDPLVVGQEHYDVARGVQSILQRYQELKDIIAILGMDELSEDDKLVVSRARKIQRFLSQPFFVAEVFTGSPGKFVSLKDTIRGFKGIMNGDYDHLPEQAFYMVGTIEEAVEKAKKL</sequence>
<gene>
    <name evidence="1" type="primary">atpD</name>
    <name type="ordered locus">YPDSF_3914</name>
</gene>